<organism>
    <name type="scientific">Actinobacillus pleuropneumoniae serotype 5b (strain L20)</name>
    <dbReference type="NCBI Taxonomy" id="416269"/>
    <lineage>
        <taxon>Bacteria</taxon>
        <taxon>Pseudomonadati</taxon>
        <taxon>Pseudomonadota</taxon>
        <taxon>Gammaproteobacteria</taxon>
        <taxon>Pasteurellales</taxon>
        <taxon>Pasteurellaceae</taxon>
        <taxon>Actinobacillus</taxon>
    </lineage>
</organism>
<feature type="chain" id="PRO_1000056452" description="ATP synthase epsilon chain">
    <location>
        <begin position="1"/>
        <end position="139"/>
    </location>
</feature>
<accession>A3N2U3</accession>
<comment type="function">
    <text evidence="1">Produces ATP from ADP in the presence of a proton gradient across the membrane.</text>
</comment>
<comment type="subunit">
    <text evidence="1">F-type ATPases have 2 components, CF(1) - the catalytic core - and CF(0) - the membrane proton channel. CF(1) has five subunits: alpha(3), beta(3), gamma(1), delta(1), epsilon(1). CF(0) has three main subunits: a, b and c.</text>
</comment>
<comment type="subcellular location">
    <subcellularLocation>
        <location evidence="1">Cell inner membrane</location>
        <topology evidence="1">Peripheral membrane protein</topology>
    </subcellularLocation>
</comment>
<comment type="similarity">
    <text evidence="1">Belongs to the ATPase epsilon chain family.</text>
</comment>
<gene>
    <name evidence="1" type="primary">atpC</name>
    <name type="ordered locus">APL_1645</name>
</gene>
<dbReference type="EMBL" id="CP000569">
    <property type="protein sequence ID" value="ABN74729.1"/>
    <property type="molecule type" value="Genomic_DNA"/>
</dbReference>
<dbReference type="RefSeq" id="WP_011848627.1">
    <property type="nucleotide sequence ID" value="NC_009053.1"/>
</dbReference>
<dbReference type="SMR" id="A3N2U3"/>
<dbReference type="STRING" id="416269.APL_1645"/>
<dbReference type="EnsemblBacteria" id="ABN74729">
    <property type="protein sequence ID" value="ABN74729"/>
    <property type="gene ID" value="APL_1645"/>
</dbReference>
<dbReference type="KEGG" id="apl:APL_1645"/>
<dbReference type="PATRIC" id="fig|416269.6.peg.1711"/>
<dbReference type="eggNOG" id="COG0355">
    <property type="taxonomic scope" value="Bacteria"/>
</dbReference>
<dbReference type="HOGENOM" id="CLU_084338_2_0_6"/>
<dbReference type="Proteomes" id="UP000001432">
    <property type="component" value="Chromosome"/>
</dbReference>
<dbReference type="GO" id="GO:0005886">
    <property type="term" value="C:plasma membrane"/>
    <property type="evidence" value="ECO:0007669"/>
    <property type="project" value="UniProtKB-SubCell"/>
</dbReference>
<dbReference type="GO" id="GO:0045259">
    <property type="term" value="C:proton-transporting ATP synthase complex"/>
    <property type="evidence" value="ECO:0007669"/>
    <property type="project" value="UniProtKB-KW"/>
</dbReference>
<dbReference type="GO" id="GO:0005524">
    <property type="term" value="F:ATP binding"/>
    <property type="evidence" value="ECO:0007669"/>
    <property type="project" value="UniProtKB-UniRule"/>
</dbReference>
<dbReference type="GO" id="GO:0046933">
    <property type="term" value="F:proton-transporting ATP synthase activity, rotational mechanism"/>
    <property type="evidence" value="ECO:0007669"/>
    <property type="project" value="UniProtKB-UniRule"/>
</dbReference>
<dbReference type="CDD" id="cd12152">
    <property type="entry name" value="F1-ATPase_delta"/>
    <property type="match status" value="1"/>
</dbReference>
<dbReference type="FunFam" id="2.60.15.10:FF:000001">
    <property type="entry name" value="ATP synthase epsilon chain"/>
    <property type="match status" value="1"/>
</dbReference>
<dbReference type="Gene3D" id="2.60.15.10">
    <property type="entry name" value="F0F1 ATP synthase delta/epsilon subunit, N-terminal"/>
    <property type="match status" value="1"/>
</dbReference>
<dbReference type="HAMAP" id="MF_00530">
    <property type="entry name" value="ATP_synth_epsil_bac"/>
    <property type="match status" value="1"/>
</dbReference>
<dbReference type="InterPro" id="IPR036794">
    <property type="entry name" value="ATP_F1_dsu/esu_C_sf"/>
</dbReference>
<dbReference type="InterPro" id="IPR001469">
    <property type="entry name" value="ATP_synth_F1_dsu/esu"/>
</dbReference>
<dbReference type="InterPro" id="IPR020546">
    <property type="entry name" value="ATP_synth_F1_dsu/esu_N"/>
</dbReference>
<dbReference type="InterPro" id="IPR036771">
    <property type="entry name" value="ATPsynth_dsu/esu_N"/>
</dbReference>
<dbReference type="NCBIfam" id="TIGR01216">
    <property type="entry name" value="ATP_synt_epsi"/>
    <property type="match status" value="1"/>
</dbReference>
<dbReference type="NCBIfam" id="NF001847">
    <property type="entry name" value="PRK00571.1-4"/>
    <property type="match status" value="1"/>
</dbReference>
<dbReference type="PANTHER" id="PTHR13822">
    <property type="entry name" value="ATP SYNTHASE DELTA/EPSILON CHAIN"/>
    <property type="match status" value="1"/>
</dbReference>
<dbReference type="PANTHER" id="PTHR13822:SF10">
    <property type="entry name" value="ATP SYNTHASE EPSILON CHAIN, CHLOROPLASTIC"/>
    <property type="match status" value="1"/>
</dbReference>
<dbReference type="Pfam" id="PF02823">
    <property type="entry name" value="ATP-synt_DE_N"/>
    <property type="match status" value="1"/>
</dbReference>
<dbReference type="SUPFAM" id="SSF46604">
    <property type="entry name" value="Epsilon subunit of F1F0-ATP synthase C-terminal domain"/>
    <property type="match status" value="1"/>
</dbReference>
<dbReference type="SUPFAM" id="SSF51344">
    <property type="entry name" value="Epsilon subunit of F1F0-ATP synthase N-terminal domain"/>
    <property type="match status" value="1"/>
</dbReference>
<evidence type="ECO:0000255" key="1">
    <source>
        <dbReference type="HAMAP-Rule" id="MF_00530"/>
    </source>
</evidence>
<reference key="1">
    <citation type="journal article" date="2008" name="J. Bacteriol.">
        <title>The complete genome sequence of Actinobacillus pleuropneumoniae L20 (serotype 5b).</title>
        <authorList>
            <person name="Foote S.J."/>
            <person name="Bosse J.T."/>
            <person name="Bouevitch A.B."/>
            <person name="Langford P.R."/>
            <person name="Young N.M."/>
            <person name="Nash J.H.E."/>
        </authorList>
    </citation>
    <scope>NUCLEOTIDE SEQUENCE [LARGE SCALE GENOMIC DNA]</scope>
    <source>
        <strain>L20</strain>
    </source>
</reference>
<proteinExistence type="inferred from homology"/>
<keyword id="KW-0066">ATP synthesis</keyword>
<keyword id="KW-0997">Cell inner membrane</keyword>
<keyword id="KW-1003">Cell membrane</keyword>
<keyword id="KW-0139">CF(1)</keyword>
<keyword id="KW-0375">Hydrogen ion transport</keyword>
<keyword id="KW-0406">Ion transport</keyword>
<keyword id="KW-0472">Membrane</keyword>
<keyword id="KW-1185">Reference proteome</keyword>
<keyword id="KW-0813">Transport</keyword>
<name>ATPE_ACTP2</name>
<protein>
    <recommendedName>
        <fullName evidence="1">ATP synthase epsilon chain</fullName>
    </recommendedName>
    <alternativeName>
        <fullName evidence="1">ATP synthase F1 sector epsilon subunit</fullName>
    </alternativeName>
    <alternativeName>
        <fullName evidence="1">F-ATPase epsilon subunit</fullName>
    </alternativeName>
</protein>
<sequence length="139" mass="15225">MASQFELSVVSAEKEIFNGNVVSVRVSGIDGELGVYAGHTPLLTSIKPGMVKYTLENGKEEFIYVSGGFLEVQPTIVTVLADVAIRGEELDQQRILAAKRKAEDTLSKSNNAELSAKLSREIAKLRVYEIVNSKLANRR</sequence>